<proteinExistence type="evidence at protein level"/>
<name>SRC_DANRE</name>
<dbReference type="EC" id="2.7.10.2"/>
<dbReference type="EMBL" id="AJ620750">
    <property type="protein sequence ID" value="CAF06181.1"/>
    <property type="molecule type" value="mRNA"/>
</dbReference>
<dbReference type="EMBL" id="BX548066">
    <property type="status" value="NOT_ANNOTATED_CDS"/>
    <property type="molecule type" value="Genomic_DNA"/>
</dbReference>
<dbReference type="EMBL" id="CU302205">
    <property type="status" value="NOT_ANNOTATED_CDS"/>
    <property type="molecule type" value="Genomic_DNA"/>
</dbReference>
<dbReference type="EMBL" id="BC116544">
    <property type="protein sequence ID" value="AAI16545.1"/>
    <property type="molecule type" value="mRNA"/>
</dbReference>
<dbReference type="RefSeq" id="NP_001003837.2">
    <property type="nucleotide sequence ID" value="NM_001003837.2"/>
</dbReference>
<dbReference type="SMR" id="Q1JPZ3"/>
<dbReference type="FunCoup" id="Q1JPZ3">
    <property type="interactions" value="1948"/>
</dbReference>
<dbReference type="STRING" id="7955.ENSDARP00000093618"/>
<dbReference type="PaxDb" id="7955-ENSDARP00000097596"/>
<dbReference type="Ensembl" id="ENSDART00000102843">
    <property type="protein sequence ID" value="ENSDARP00000093618"/>
    <property type="gene ID" value="ENSDARG00000008107"/>
</dbReference>
<dbReference type="Ensembl" id="ENSDART00000184254">
    <property type="protein sequence ID" value="ENSDARP00000151348"/>
    <property type="gene ID" value="ENSDARG00000008107"/>
</dbReference>
<dbReference type="GeneID" id="325084"/>
<dbReference type="KEGG" id="dre:325084"/>
<dbReference type="AGR" id="ZFIN:ZDB-GENE-030131-3809"/>
<dbReference type="CTD" id="6714"/>
<dbReference type="ZFIN" id="ZDB-GENE-030131-3809">
    <property type="gene designation" value="src"/>
</dbReference>
<dbReference type="eggNOG" id="KOG0197">
    <property type="taxonomic scope" value="Eukaryota"/>
</dbReference>
<dbReference type="HOGENOM" id="CLU_000288_7_2_1"/>
<dbReference type="InParanoid" id="Q1JPZ3"/>
<dbReference type="OrthoDB" id="4062651at2759"/>
<dbReference type="PhylomeDB" id="Q1JPZ3"/>
<dbReference type="TreeFam" id="TF351634"/>
<dbReference type="Reactome" id="R-DRE-1227986">
    <property type="pathway name" value="Signaling by ERBB2"/>
</dbReference>
<dbReference type="Reactome" id="R-DRE-1251985">
    <property type="pathway name" value="Nuclear signaling by ERBB4"/>
</dbReference>
<dbReference type="Reactome" id="R-DRE-1253288">
    <property type="pathway name" value="Downregulation of ERBB4 signaling"/>
</dbReference>
<dbReference type="Reactome" id="R-DRE-1257604">
    <property type="pathway name" value="PIP3 activates AKT signaling"/>
</dbReference>
<dbReference type="Reactome" id="R-DRE-1295596">
    <property type="pathway name" value="Spry regulation of FGF signaling"/>
</dbReference>
<dbReference type="Reactome" id="R-DRE-1433557">
    <property type="pathway name" value="Signaling by SCF-KIT"/>
</dbReference>
<dbReference type="Reactome" id="R-DRE-1433559">
    <property type="pathway name" value="Regulation of KIT signaling"/>
</dbReference>
<dbReference type="Reactome" id="R-DRE-177929">
    <property type="pathway name" value="Signaling by EGFR"/>
</dbReference>
<dbReference type="Reactome" id="R-DRE-186763">
    <property type="pathway name" value="Downstream signal transduction"/>
</dbReference>
<dbReference type="Reactome" id="R-DRE-191650">
    <property type="pathway name" value="Regulation of gap junction activity"/>
</dbReference>
<dbReference type="Reactome" id="R-DRE-354192">
    <property type="pathway name" value="Integrin signaling"/>
</dbReference>
<dbReference type="Reactome" id="R-DRE-3928663">
    <property type="pathway name" value="EPHA-mediated growth cone collapse"/>
</dbReference>
<dbReference type="Reactome" id="R-DRE-3928664">
    <property type="pathway name" value="Ephrin signaling"/>
</dbReference>
<dbReference type="Reactome" id="R-DRE-3928665">
    <property type="pathway name" value="EPH-ephrin mediated repulsion of cells"/>
</dbReference>
<dbReference type="Reactome" id="R-DRE-418592">
    <property type="pathway name" value="ADP signalling through P2Y purinoceptor 1"/>
</dbReference>
<dbReference type="Reactome" id="R-DRE-418594">
    <property type="pathway name" value="G alpha (i) signalling events"/>
</dbReference>
<dbReference type="Reactome" id="R-DRE-418885">
    <property type="pathway name" value="DCC mediated attractive signaling"/>
</dbReference>
<dbReference type="Reactome" id="R-DRE-430116">
    <property type="pathway name" value="GP1b-IX-V activation signalling"/>
</dbReference>
<dbReference type="Reactome" id="R-DRE-4420097">
    <property type="pathway name" value="VEGFA-VEGFR2 Pathway"/>
</dbReference>
<dbReference type="Reactome" id="R-DRE-456926">
    <property type="pathway name" value="Thrombin signalling through proteinase activated receptors (PARs)"/>
</dbReference>
<dbReference type="Reactome" id="R-DRE-5218921">
    <property type="pathway name" value="VEGFR2 mediated cell proliferation"/>
</dbReference>
<dbReference type="Reactome" id="R-DRE-6811558">
    <property type="pathway name" value="PI5P, PP2A and IER3 Regulate PI3K/AKT Signaling"/>
</dbReference>
<dbReference type="Reactome" id="R-DRE-69231">
    <property type="pathway name" value="Cyclin D associated events in G1"/>
</dbReference>
<dbReference type="Reactome" id="R-DRE-8934903">
    <property type="pathway name" value="Receptor Mediated Mitophagy"/>
</dbReference>
<dbReference type="Reactome" id="R-DRE-8941858">
    <property type="pathway name" value="Regulation of RUNX3 expression and activity"/>
</dbReference>
<dbReference type="Reactome" id="R-DRE-9009391">
    <property type="pathway name" value="Extra-nuclear estrogen signaling"/>
</dbReference>
<dbReference type="PRO" id="PR:Q1JPZ3"/>
<dbReference type="Proteomes" id="UP000000437">
    <property type="component" value="Chromosome 23"/>
</dbReference>
<dbReference type="Bgee" id="ENSDARG00000008107">
    <property type="expression patterns" value="Expressed in tail bud paraxial mesoderm and 33 other cell types or tissues"/>
</dbReference>
<dbReference type="ExpressionAtlas" id="Q1JPZ3">
    <property type="expression patterns" value="baseline"/>
</dbReference>
<dbReference type="GO" id="GO:0030054">
    <property type="term" value="C:cell junction"/>
    <property type="evidence" value="ECO:0000250"/>
    <property type="project" value="UniProtKB"/>
</dbReference>
<dbReference type="GO" id="GO:0005911">
    <property type="term" value="C:cell-cell junction"/>
    <property type="evidence" value="ECO:0000250"/>
    <property type="project" value="UniProtKB"/>
</dbReference>
<dbReference type="GO" id="GO:0005856">
    <property type="term" value="C:cytoskeleton"/>
    <property type="evidence" value="ECO:0000250"/>
    <property type="project" value="UniProtKB"/>
</dbReference>
<dbReference type="GO" id="GO:0005925">
    <property type="term" value="C:focal adhesion"/>
    <property type="evidence" value="ECO:0000250"/>
    <property type="project" value="UniProtKB"/>
</dbReference>
<dbReference type="GO" id="GO:0005743">
    <property type="term" value="C:mitochondrial inner membrane"/>
    <property type="evidence" value="ECO:0000250"/>
    <property type="project" value="UniProtKB"/>
</dbReference>
<dbReference type="GO" id="GO:0005634">
    <property type="term" value="C:nucleus"/>
    <property type="evidence" value="ECO:0000250"/>
    <property type="project" value="UniProtKB"/>
</dbReference>
<dbReference type="GO" id="GO:0048471">
    <property type="term" value="C:perinuclear region of cytoplasm"/>
    <property type="evidence" value="ECO:0000250"/>
    <property type="project" value="UniProtKB"/>
</dbReference>
<dbReference type="GO" id="GO:0005886">
    <property type="term" value="C:plasma membrane"/>
    <property type="evidence" value="ECO:0000250"/>
    <property type="project" value="UniProtKB"/>
</dbReference>
<dbReference type="GO" id="GO:0005524">
    <property type="term" value="F:ATP binding"/>
    <property type="evidence" value="ECO:0007669"/>
    <property type="project" value="UniProtKB-KW"/>
</dbReference>
<dbReference type="GO" id="GO:0004715">
    <property type="term" value="F:non-membrane spanning protein tyrosine kinase activity"/>
    <property type="evidence" value="ECO:0000318"/>
    <property type="project" value="GO_Central"/>
</dbReference>
<dbReference type="GO" id="GO:0005102">
    <property type="term" value="F:signaling receptor binding"/>
    <property type="evidence" value="ECO:0000318"/>
    <property type="project" value="GO_Central"/>
</dbReference>
<dbReference type="GO" id="GO:0007155">
    <property type="term" value="P:cell adhesion"/>
    <property type="evidence" value="ECO:0000318"/>
    <property type="project" value="GO_Central"/>
</dbReference>
<dbReference type="GO" id="GO:0030154">
    <property type="term" value="P:cell differentiation"/>
    <property type="evidence" value="ECO:0000318"/>
    <property type="project" value="GO_Central"/>
</dbReference>
<dbReference type="GO" id="GO:0007173">
    <property type="term" value="P:epidermal growth factor receptor signaling pathway"/>
    <property type="evidence" value="ECO:0000318"/>
    <property type="project" value="GO_Central"/>
</dbReference>
<dbReference type="GO" id="GO:2001237">
    <property type="term" value="P:negative regulation of extrinsic apoptotic signaling pathway"/>
    <property type="evidence" value="ECO:0000318"/>
    <property type="project" value="GO_Central"/>
</dbReference>
<dbReference type="GO" id="GO:2001243">
    <property type="term" value="P:negative regulation of intrinsic apoptotic signaling pathway"/>
    <property type="evidence" value="ECO:0000318"/>
    <property type="project" value="GO_Central"/>
</dbReference>
<dbReference type="GO" id="GO:0050847">
    <property type="term" value="P:progesterone receptor signaling pathway"/>
    <property type="evidence" value="ECO:0000318"/>
    <property type="project" value="GO_Central"/>
</dbReference>
<dbReference type="GO" id="GO:0043114">
    <property type="term" value="P:regulation of vascular permeability"/>
    <property type="evidence" value="ECO:0000315"/>
    <property type="project" value="ZFIN"/>
</dbReference>
<dbReference type="GO" id="GO:0001878">
    <property type="term" value="P:response to yeast"/>
    <property type="evidence" value="ECO:0000314"/>
    <property type="project" value="ZFIN"/>
</dbReference>
<dbReference type="CDD" id="cd05071">
    <property type="entry name" value="PTKc_Src"/>
    <property type="match status" value="1"/>
</dbReference>
<dbReference type="CDD" id="cd10365">
    <property type="entry name" value="SH2_Src_Src"/>
    <property type="match status" value="1"/>
</dbReference>
<dbReference type="FunFam" id="1.10.510.10:FF:000553">
    <property type="entry name" value="Tyrosine-protein kinase"/>
    <property type="match status" value="1"/>
</dbReference>
<dbReference type="FunFam" id="3.30.200.20:FF:000016">
    <property type="entry name" value="Tyrosine-protein kinase"/>
    <property type="match status" value="1"/>
</dbReference>
<dbReference type="FunFam" id="3.30.505.10:FF:000001">
    <property type="entry name" value="Tyrosine-protein kinase"/>
    <property type="match status" value="1"/>
</dbReference>
<dbReference type="FunFam" id="2.30.30.40:FF:000182">
    <property type="entry name" value="Tyrosine-protein kinase Fyn"/>
    <property type="match status" value="1"/>
</dbReference>
<dbReference type="Gene3D" id="3.30.200.20">
    <property type="entry name" value="Phosphorylase Kinase, domain 1"/>
    <property type="match status" value="1"/>
</dbReference>
<dbReference type="Gene3D" id="3.30.505.10">
    <property type="entry name" value="SH2 domain"/>
    <property type="match status" value="1"/>
</dbReference>
<dbReference type="Gene3D" id="2.30.30.40">
    <property type="entry name" value="SH3 Domains"/>
    <property type="match status" value="1"/>
</dbReference>
<dbReference type="Gene3D" id="1.10.510.10">
    <property type="entry name" value="Transferase(Phosphotransferase) domain 1"/>
    <property type="match status" value="1"/>
</dbReference>
<dbReference type="InterPro" id="IPR011009">
    <property type="entry name" value="Kinase-like_dom_sf"/>
</dbReference>
<dbReference type="InterPro" id="IPR050198">
    <property type="entry name" value="Non-receptor_tyrosine_kinases"/>
</dbReference>
<dbReference type="InterPro" id="IPR000719">
    <property type="entry name" value="Prot_kinase_dom"/>
</dbReference>
<dbReference type="InterPro" id="IPR017441">
    <property type="entry name" value="Protein_kinase_ATP_BS"/>
</dbReference>
<dbReference type="InterPro" id="IPR001245">
    <property type="entry name" value="Ser-Thr/Tyr_kinase_cat_dom"/>
</dbReference>
<dbReference type="InterPro" id="IPR000980">
    <property type="entry name" value="SH2"/>
</dbReference>
<dbReference type="InterPro" id="IPR036860">
    <property type="entry name" value="SH2_dom_sf"/>
</dbReference>
<dbReference type="InterPro" id="IPR036028">
    <property type="entry name" value="SH3-like_dom_sf"/>
</dbReference>
<dbReference type="InterPro" id="IPR001452">
    <property type="entry name" value="SH3_domain"/>
</dbReference>
<dbReference type="InterPro" id="IPR008266">
    <property type="entry name" value="Tyr_kinase_AS"/>
</dbReference>
<dbReference type="InterPro" id="IPR020635">
    <property type="entry name" value="Tyr_kinase_cat_dom"/>
</dbReference>
<dbReference type="PANTHER" id="PTHR24418">
    <property type="entry name" value="TYROSINE-PROTEIN KINASE"/>
    <property type="match status" value="1"/>
</dbReference>
<dbReference type="Pfam" id="PF07714">
    <property type="entry name" value="PK_Tyr_Ser-Thr"/>
    <property type="match status" value="1"/>
</dbReference>
<dbReference type="Pfam" id="PF00017">
    <property type="entry name" value="SH2"/>
    <property type="match status" value="1"/>
</dbReference>
<dbReference type="Pfam" id="PF00018">
    <property type="entry name" value="SH3_1"/>
    <property type="match status" value="1"/>
</dbReference>
<dbReference type="PRINTS" id="PR00401">
    <property type="entry name" value="SH2DOMAIN"/>
</dbReference>
<dbReference type="PRINTS" id="PR00452">
    <property type="entry name" value="SH3DOMAIN"/>
</dbReference>
<dbReference type="PRINTS" id="PR00109">
    <property type="entry name" value="TYRKINASE"/>
</dbReference>
<dbReference type="SMART" id="SM00252">
    <property type="entry name" value="SH2"/>
    <property type="match status" value="1"/>
</dbReference>
<dbReference type="SMART" id="SM00326">
    <property type="entry name" value="SH3"/>
    <property type="match status" value="1"/>
</dbReference>
<dbReference type="SMART" id="SM00219">
    <property type="entry name" value="TyrKc"/>
    <property type="match status" value="1"/>
</dbReference>
<dbReference type="SUPFAM" id="SSF56112">
    <property type="entry name" value="Protein kinase-like (PK-like)"/>
    <property type="match status" value="1"/>
</dbReference>
<dbReference type="SUPFAM" id="SSF55550">
    <property type="entry name" value="SH2 domain"/>
    <property type="match status" value="1"/>
</dbReference>
<dbReference type="SUPFAM" id="SSF50044">
    <property type="entry name" value="SH3-domain"/>
    <property type="match status" value="1"/>
</dbReference>
<dbReference type="PROSITE" id="PS00107">
    <property type="entry name" value="PROTEIN_KINASE_ATP"/>
    <property type="match status" value="1"/>
</dbReference>
<dbReference type="PROSITE" id="PS50011">
    <property type="entry name" value="PROTEIN_KINASE_DOM"/>
    <property type="match status" value="1"/>
</dbReference>
<dbReference type="PROSITE" id="PS00109">
    <property type="entry name" value="PROTEIN_KINASE_TYR"/>
    <property type="match status" value="1"/>
</dbReference>
<dbReference type="PROSITE" id="PS50001">
    <property type="entry name" value="SH2"/>
    <property type="match status" value="1"/>
</dbReference>
<dbReference type="PROSITE" id="PS50002">
    <property type="entry name" value="SH3"/>
    <property type="match status" value="1"/>
</dbReference>
<gene>
    <name type="primary">src</name>
</gene>
<accession>Q1JPZ3</accession>
<accession>Q6EWH0</accession>
<organism>
    <name type="scientific">Danio rerio</name>
    <name type="common">Zebrafish</name>
    <name type="synonym">Brachydanio rerio</name>
    <dbReference type="NCBI Taxonomy" id="7955"/>
    <lineage>
        <taxon>Eukaryota</taxon>
        <taxon>Metazoa</taxon>
        <taxon>Chordata</taxon>
        <taxon>Craniata</taxon>
        <taxon>Vertebrata</taxon>
        <taxon>Euteleostomi</taxon>
        <taxon>Actinopterygii</taxon>
        <taxon>Neopterygii</taxon>
        <taxon>Teleostei</taxon>
        <taxon>Ostariophysi</taxon>
        <taxon>Cypriniformes</taxon>
        <taxon>Danionidae</taxon>
        <taxon>Danioninae</taxon>
        <taxon>Danio</taxon>
    </lineage>
</organism>
<sequence length="534" mass="60147">MGGVKSKPKELGQRSRSLDDGTGGHHHHTPNPTSFTPNRSPPVEGSRRGTQPNIINAEQALFGGVNSTTNSITSPNRIGILGGVTTFVALYDYESRTASDLSFRKGERLQIVNNTEGDWWLARSLTTGESGYIPSNYVAPSDSIQAEEWYFGKITRRDSERLLLNLENRRGTFLVRESETTKGAYCLSVLDYDNVKGLNVKHYKIRKLDSGGFYITSRTQFSTLQQLVNHYRQHADGLCHSLTDVCPVLKPPTQGLARDAWEIPRDSLRLDVKLGQGCFGEVWMGTWNGTTRVAIKTLKPGTMSPEAFLQEAQVMKKLRHEKLVQLYAVVSEEPIYIVTEYMGQGSLLDFLKGDMGKMLRLPQLVDMASQIASGMAYVERMNYVHRDLRAANILVGDNLVCKVADFGLARLIEDNEYTARQGAKFPIKWTAPEAALYGRFTIKSDVWSFGILLTELTTKGRVPYPGMVNREVLDQVERGYRMPCPAECPDSLHELMLTCWRKEPEERPTFEYLQGFLEDYFTSTEPQYQPGENL</sequence>
<feature type="initiator methionine" description="Removed" evidence="1">
    <location>
        <position position="1"/>
    </location>
</feature>
<feature type="chain" id="PRO_0000418880" description="Proto-oncogene tyrosine-protein kinase Src">
    <location>
        <begin position="2"/>
        <end position="534"/>
    </location>
</feature>
<feature type="domain" description="SH3" evidence="7">
    <location>
        <begin position="82"/>
        <end position="143"/>
    </location>
</feature>
<feature type="domain" description="SH2" evidence="6">
    <location>
        <begin position="149"/>
        <end position="253"/>
    </location>
</feature>
<feature type="domain" description="Protein kinase" evidence="5">
    <location>
        <begin position="268"/>
        <end position="521"/>
    </location>
</feature>
<feature type="region of interest" description="Disordered" evidence="9">
    <location>
        <begin position="1"/>
        <end position="50"/>
    </location>
</feature>
<feature type="compositionally biased region" description="Basic and acidic residues" evidence="9">
    <location>
        <begin position="7"/>
        <end position="23"/>
    </location>
</feature>
<feature type="active site" description="Proton acceptor" evidence="5 8">
    <location>
        <position position="387"/>
    </location>
</feature>
<feature type="binding site" evidence="5">
    <location>
        <begin position="274"/>
        <end position="282"/>
    </location>
    <ligand>
        <name>ATP</name>
        <dbReference type="ChEBI" id="CHEBI:30616"/>
    </ligand>
</feature>
<feature type="binding site" evidence="5">
    <location>
        <position position="296"/>
    </location>
    <ligand>
        <name>ATP</name>
        <dbReference type="ChEBI" id="CHEBI:30616"/>
    </ligand>
</feature>
<feature type="modified residue" description="Phosphoserine" evidence="1">
    <location>
        <position position="17"/>
    </location>
</feature>
<feature type="modified residue" description="Phosphoserine" evidence="1">
    <location>
        <position position="34"/>
    </location>
</feature>
<feature type="modified residue" description="Phosphoserine" evidence="1">
    <location>
        <position position="67"/>
    </location>
</feature>
<feature type="modified residue" description="Phosphothreonine" evidence="1">
    <location>
        <position position="73"/>
    </location>
</feature>
<feature type="modified residue" description="Phosphoserine; by CDK5" evidence="1">
    <location>
        <position position="74"/>
    </location>
</feature>
<feature type="modified residue" description="Phosphotyrosine" evidence="1">
    <location>
        <position position="185"/>
    </location>
</feature>
<feature type="modified residue" description="Phosphotyrosine; by autocatalysis" evidence="1">
    <location>
        <position position="417"/>
    </location>
</feature>
<feature type="modified residue" description="Phosphotyrosine; by FAK2" evidence="1">
    <location>
        <position position="417"/>
    </location>
</feature>
<feature type="modified residue" description="Phosphotyrosine" evidence="1">
    <location>
        <position position="437"/>
    </location>
</feature>
<feature type="modified residue" description="S-nitrosocysteine" evidence="1">
    <location>
        <position position="499"/>
    </location>
</feature>
<feature type="modified residue" description="Phosphothreonine" evidence="1">
    <location>
        <position position="509"/>
    </location>
</feature>
<feature type="modified residue" description="Phosphotyrosine" evidence="1">
    <location>
        <position position="520"/>
    </location>
</feature>
<feature type="modified residue" description="Phosphotyrosine; by CSK" evidence="1">
    <location>
        <position position="528"/>
    </location>
</feature>
<feature type="lipid moiety-binding region" description="N-myristoyl glycine" evidence="1">
    <location>
        <position position="2"/>
    </location>
</feature>
<feature type="mutagenesis site" description="Lower affinity for AMOTL2-binding compared with wild-type." evidence="11">
    <original>Y</original>
    <variation>F</variation>
    <location>
        <position position="528"/>
    </location>
</feature>
<feature type="sequence conflict" description="In Ref. 3; AAI16545." evidence="12" ref="3">
    <original>V</original>
    <variation>A</variation>
    <location>
        <position position="4"/>
    </location>
</feature>
<feature type="sequence conflict" description="In Ref. 3; AAI16545." evidence="12" ref="3">
    <original>L</original>
    <variation>M</variation>
    <location>
        <position position="166"/>
    </location>
</feature>
<reference key="1">
    <citation type="journal article" date="2005" name="EMBO Rep.">
        <title>Fyn/Yes and non-canonical Wnt signalling converge on RhoA in vertebrate gastrulation cell movements.</title>
        <authorList>
            <person name="Jopling C."/>
            <person name="den Hertog J."/>
        </authorList>
    </citation>
    <scope>NUCLEOTIDE SEQUENCE [MRNA]</scope>
    <scope>TISSUE SPECIFICITY</scope>
</reference>
<reference key="2">
    <citation type="journal article" date="2013" name="Nature">
        <title>The zebrafish reference genome sequence and its relationship to the human genome.</title>
        <authorList>
            <person name="Howe K."/>
            <person name="Clark M.D."/>
            <person name="Torroja C.F."/>
            <person name="Torrance J."/>
            <person name="Berthelot C."/>
            <person name="Muffato M."/>
            <person name="Collins J.E."/>
            <person name="Humphray S."/>
            <person name="McLaren K."/>
            <person name="Matthews L."/>
            <person name="McLaren S."/>
            <person name="Sealy I."/>
            <person name="Caccamo M."/>
            <person name="Churcher C."/>
            <person name="Scott C."/>
            <person name="Barrett J.C."/>
            <person name="Koch R."/>
            <person name="Rauch G.J."/>
            <person name="White S."/>
            <person name="Chow W."/>
            <person name="Kilian B."/>
            <person name="Quintais L.T."/>
            <person name="Guerra-Assuncao J.A."/>
            <person name="Zhou Y."/>
            <person name="Gu Y."/>
            <person name="Yen J."/>
            <person name="Vogel J.H."/>
            <person name="Eyre T."/>
            <person name="Redmond S."/>
            <person name="Banerjee R."/>
            <person name="Chi J."/>
            <person name="Fu B."/>
            <person name="Langley E."/>
            <person name="Maguire S.F."/>
            <person name="Laird G.K."/>
            <person name="Lloyd D."/>
            <person name="Kenyon E."/>
            <person name="Donaldson S."/>
            <person name="Sehra H."/>
            <person name="Almeida-King J."/>
            <person name="Loveland J."/>
            <person name="Trevanion S."/>
            <person name="Jones M."/>
            <person name="Quail M."/>
            <person name="Willey D."/>
            <person name="Hunt A."/>
            <person name="Burton J."/>
            <person name="Sims S."/>
            <person name="McLay K."/>
            <person name="Plumb B."/>
            <person name="Davis J."/>
            <person name="Clee C."/>
            <person name="Oliver K."/>
            <person name="Clark R."/>
            <person name="Riddle C."/>
            <person name="Elliot D."/>
            <person name="Threadgold G."/>
            <person name="Harden G."/>
            <person name="Ware D."/>
            <person name="Begum S."/>
            <person name="Mortimore B."/>
            <person name="Kerry G."/>
            <person name="Heath P."/>
            <person name="Phillimore B."/>
            <person name="Tracey A."/>
            <person name="Corby N."/>
            <person name="Dunn M."/>
            <person name="Johnson C."/>
            <person name="Wood J."/>
            <person name="Clark S."/>
            <person name="Pelan S."/>
            <person name="Griffiths G."/>
            <person name="Smith M."/>
            <person name="Glithero R."/>
            <person name="Howden P."/>
            <person name="Barker N."/>
            <person name="Lloyd C."/>
            <person name="Stevens C."/>
            <person name="Harley J."/>
            <person name="Holt K."/>
            <person name="Panagiotidis G."/>
            <person name="Lovell J."/>
            <person name="Beasley H."/>
            <person name="Henderson C."/>
            <person name="Gordon D."/>
            <person name="Auger K."/>
            <person name="Wright D."/>
            <person name="Collins J."/>
            <person name="Raisen C."/>
            <person name="Dyer L."/>
            <person name="Leung K."/>
            <person name="Robertson L."/>
            <person name="Ambridge K."/>
            <person name="Leongamornlert D."/>
            <person name="McGuire S."/>
            <person name="Gilderthorp R."/>
            <person name="Griffiths C."/>
            <person name="Manthravadi D."/>
            <person name="Nichol S."/>
            <person name="Barker G."/>
            <person name="Whitehead S."/>
            <person name="Kay M."/>
            <person name="Brown J."/>
            <person name="Murnane C."/>
            <person name="Gray E."/>
            <person name="Humphries M."/>
            <person name="Sycamore N."/>
            <person name="Barker D."/>
            <person name="Saunders D."/>
            <person name="Wallis J."/>
            <person name="Babbage A."/>
            <person name="Hammond S."/>
            <person name="Mashreghi-Mohammadi M."/>
            <person name="Barr L."/>
            <person name="Martin S."/>
            <person name="Wray P."/>
            <person name="Ellington A."/>
            <person name="Matthews N."/>
            <person name="Ellwood M."/>
            <person name="Woodmansey R."/>
            <person name="Clark G."/>
            <person name="Cooper J."/>
            <person name="Tromans A."/>
            <person name="Grafham D."/>
            <person name="Skuce C."/>
            <person name="Pandian R."/>
            <person name="Andrews R."/>
            <person name="Harrison E."/>
            <person name="Kimberley A."/>
            <person name="Garnett J."/>
            <person name="Fosker N."/>
            <person name="Hall R."/>
            <person name="Garner P."/>
            <person name="Kelly D."/>
            <person name="Bird C."/>
            <person name="Palmer S."/>
            <person name="Gehring I."/>
            <person name="Berger A."/>
            <person name="Dooley C.M."/>
            <person name="Ersan-Urun Z."/>
            <person name="Eser C."/>
            <person name="Geiger H."/>
            <person name="Geisler M."/>
            <person name="Karotki L."/>
            <person name="Kirn A."/>
            <person name="Konantz J."/>
            <person name="Konantz M."/>
            <person name="Oberlander M."/>
            <person name="Rudolph-Geiger S."/>
            <person name="Teucke M."/>
            <person name="Lanz C."/>
            <person name="Raddatz G."/>
            <person name="Osoegawa K."/>
            <person name="Zhu B."/>
            <person name="Rapp A."/>
            <person name="Widaa S."/>
            <person name="Langford C."/>
            <person name="Yang F."/>
            <person name="Schuster S.C."/>
            <person name="Carter N.P."/>
            <person name="Harrow J."/>
            <person name="Ning Z."/>
            <person name="Herrero J."/>
            <person name="Searle S.M."/>
            <person name="Enright A."/>
            <person name="Geisler R."/>
            <person name="Plasterk R.H."/>
            <person name="Lee C."/>
            <person name="Westerfield M."/>
            <person name="de Jong P.J."/>
            <person name="Zon L.I."/>
            <person name="Postlethwait J.H."/>
            <person name="Nusslein-Volhard C."/>
            <person name="Hubbard T.J."/>
            <person name="Roest Crollius H."/>
            <person name="Rogers J."/>
            <person name="Stemple D.L."/>
        </authorList>
    </citation>
    <scope>NUCLEOTIDE SEQUENCE [LARGE SCALE GENOMIC DNA]</scope>
    <source>
        <strain>Tuebingen</strain>
    </source>
</reference>
<reference key="3">
    <citation type="submission" date="2006-05" db="EMBL/GenBank/DDBJ databases">
        <authorList>
            <consortium name="NIH - Zebrafish Gene Collection (ZGC) project"/>
        </authorList>
    </citation>
    <scope>NUCLEOTIDE SEQUENCE [LARGE SCALE MRNA]</scope>
    <source>
        <tissue>Ovary</tissue>
    </source>
</reference>
<reference key="4">
    <citation type="journal article" date="2007" name="Development">
        <title>Amotl2 is essential for cell movements in zebrafish embryo and regulates c-Src translocation.</title>
        <authorList>
            <person name="Huang H."/>
            <person name="Lu F.I."/>
            <person name="Jia S."/>
            <person name="Meng S."/>
            <person name="Cao Y."/>
            <person name="Wang Y."/>
            <person name="Ma W."/>
            <person name="Yin K."/>
            <person name="Wen Z."/>
            <person name="Peng J."/>
            <person name="Thisse C."/>
            <person name="Thisse B."/>
            <person name="Meng A."/>
        </authorList>
    </citation>
    <scope>INTERACTION WITH AMOTL2</scope>
    <scope>MUTAGENESIS OF TYR-528</scope>
</reference>
<comment type="function">
    <text evidence="4 12">Non-receptor protein tyrosine kinase which is activated following engagement of many different classes of cellular receptors including immune response receptors, integrins and other adhesion receptors, receptor protein tyrosine kinases, G protein-coupled receptors as well as cytokine receptors. Participates in signaling pathways that control a diverse spectrum of biological activities including gene transcription, immune response, cell adhesion, cell cycle progression, apoptosis, migration, and transformation. Due to functional redundancy between members of the SRC kinase family, identification of the specific role of each src kinase is very difficult. Src appears to be one of the primary kinases activated following engagement of receptors and plays a role in the activation of other protein tyrosine kinase (PTK) families. Receptor clustering or dimerization leads to recruitment of src to the receptor complexes where it phosphorylates the tyrosine residues within the receptor cytoplasmic domains. Plays an important role in the regulation of cytoskeletal organization through phosphorylation of specific substrates involved in this process (Probable). When cells adhere via focal adhesions to the extracellular matrix, signals are transmitted by integrins into the cell resulting in tyrosine phosphorylation of a number of focal adhesion proteins, including ptk2/fak1 and paxillin (pxn) (By similarity). Also active at the sites of cell-cell contact adherens junctions and at gap junctions. Implicated in the regulation of pre-mRNA-processing (Probable). Might be involved not only in mediating the transduction of mitogenic signals at the level of the plasma membrane but also in controlling progression through the cell cycle via interaction with regulatory proteins in the nucleus. Involved in anchorage-independent cell growth (By similarity).</text>
</comment>
<comment type="catalytic activity">
    <reaction evidence="8">
        <text>L-tyrosyl-[protein] + ATP = O-phospho-L-tyrosyl-[protein] + ADP + H(+)</text>
        <dbReference type="Rhea" id="RHEA:10596"/>
        <dbReference type="Rhea" id="RHEA-COMP:10136"/>
        <dbReference type="Rhea" id="RHEA-COMP:20101"/>
        <dbReference type="ChEBI" id="CHEBI:15378"/>
        <dbReference type="ChEBI" id="CHEBI:30616"/>
        <dbReference type="ChEBI" id="CHEBI:46858"/>
        <dbReference type="ChEBI" id="CHEBI:61978"/>
        <dbReference type="ChEBI" id="CHEBI:456216"/>
        <dbReference type="EC" id="2.7.10.2"/>
    </reaction>
</comment>
<comment type="activity regulation">
    <text evidence="1">Becomes activated when its major tyrosine phosphorylation site is not phosphorylated. It can also be activated by point mutations as well as by truncations at the C-terminal end or by other mutations. Heme regulates its activity by enhancing the phosphorylation on Tyr-528 (By similarity).</text>
</comment>
<comment type="subunit">
    <text evidence="11">Interacts with amotl2; this interaction promotes the translocation of phosphorylated src to peripheral cell-matrix adhesion sites.</text>
</comment>
<comment type="subcellular location">
    <subcellularLocation>
        <location evidence="2">Cell membrane</location>
        <topology evidence="3">Lipid-anchor</topology>
    </subcellularLocation>
    <subcellularLocation>
        <location evidence="3">Mitochondrion inner membrane</location>
    </subcellularLocation>
    <subcellularLocation>
        <location evidence="2">Nucleus</location>
    </subcellularLocation>
    <subcellularLocation>
        <location evidence="2">Cytoplasm</location>
        <location evidence="2">Cytoskeleton</location>
    </subcellularLocation>
    <subcellularLocation>
        <location evidence="3">Cell junction</location>
        <location evidence="3">Focal adhesion</location>
    </subcellularLocation>
    <subcellularLocation>
        <location evidence="4">Cytoplasm</location>
        <location evidence="4">Perinuclear region</location>
    </subcellularLocation>
    <subcellularLocation>
        <location evidence="4">Cell junction</location>
    </subcellularLocation>
    <text evidence="4">Localizes to focal adhesion sites following integrin engagement. Localization to focal adhesion sites requires myristoylation and the SH3 domain.</text>
</comment>
<comment type="tissue specificity">
    <text evidence="10">Widely expressed.</text>
</comment>
<comment type="domain">
    <text evidence="1">The SH2 and SH3 domains are important for the intramolecular and intermolecular interactions that regulate catalytic activity, localization, and substrate recruitment.</text>
</comment>
<comment type="PTM">
    <text evidence="1">Myristoylated at Gly-2, and this is essential for targeting to membranes.</text>
</comment>
<comment type="PTM">
    <text evidence="1">Dephosphorylated at Tyr-528 by PTPRJ. Phosphorylated on Tyr-528 by c-Src kinase (CSK). The phosphorylated form is termed pp60c-src. Dephosphorylated by PTPRJ at Tyr-417. Normally maintained in an inactive conformation with the SH2 domain engaged with Tyr-528, the SH3 domain engaged with the SH2-kinase linker, and Tyr-417 dephosphorylated. Dephosphorylation of Tyr-528 as a result of protein tyrosine phosphatase (PTP) action disrupts the intramolecular interaction between the SH2 domain and Tyr-528, Tyr-417 can then become autophosphorylated, resulting in SRC activation. Phosphorylation of Tyr-528 by CSK allows this interaction to reform, resulting in SRC inactivation (By similarity).</text>
</comment>
<comment type="PTM">
    <text evidence="1">S-nitrosylation is important for activation of kinase activity.</text>
</comment>
<comment type="similarity">
    <text evidence="5">Belongs to the protein kinase superfamily. Tyr protein kinase family. SRC subfamily.</text>
</comment>
<evidence type="ECO:0000250" key="1"/>
<evidence type="ECO:0000250" key="2">
    <source>
        <dbReference type="UniProtKB" id="P00523"/>
    </source>
</evidence>
<evidence type="ECO:0000250" key="3">
    <source>
        <dbReference type="UniProtKB" id="P05480"/>
    </source>
</evidence>
<evidence type="ECO:0000250" key="4">
    <source>
        <dbReference type="UniProtKB" id="P12931"/>
    </source>
</evidence>
<evidence type="ECO:0000255" key="5">
    <source>
        <dbReference type="PROSITE-ProRule" id="PRU00159"/>
    </source>
</evidence>
<evidence type="ECO:0000255" key="6">
    <source>
        <dbReference type="PROSITE-ProRule" id="PRU00191"/>
    </source>
</evidence>
<evidence type="ECO:0000255" key="7">
    <source>
        <dbReference type="PROSITE-ProRule" id="PRU00192"/>
    </source>
</evidence>
<evidence type="ECO:0000255" key="8">
    <source>
        <dbReference type="PROSITE-ProRule" id="PRU10028"/>
    </source>
</evidence>
<evidence type="ECO:0000256" key="9">
    <source>
        <dbReference type="SAM" id="MobiDB-lite"/>
    </source>
</evidence>
<evidence type="ECO:0000269" key="10">
    <source>
    </source>
</evidence>
<evidence type="ECO:0000269" key="11">
    <source>
    </source>
</evidence>
<evidence type="ECO:0000305" key="12"/>
<keyword id="KW-0067">ATP-binding</keyword>
<keyword id="KW-0130">Cell adhesion</keyword>
<keyword id="KW-0131">Cell cycle</keyword>
<keyword id="KW-0965">Cell junction</keyword>
<keyword id="KW-1003">Cell membrane</keyword>
<keyword id="KW-0963">Cytoplasm</keyword>
<keyword id="KW-0206">Cytoskeleton</keyword>
<keyword id="KW-0418">Kinase</keyword>
<keyword id="KW-0449">Lipoprotein</keyword>
<keyword id="KW-0472">Membrane</keyword>
<keyword id="KW-0496">Mitochondrion</keyword>
<keyword id="KW-0999">Mitochondrion inner membrane</keyword>
<keyword id="KW-0519">Myristate</keyword>
<keyword id="KW-0547">Nucleotide-binding</keyword>
<keyword id="KW-0539">Nucleus</keyword>
<keyword id="KW-0597">Phosphoprotein</keyword>
<keyword id="KW-1185">Reference proteome</keyword>
<keyword id="KW-0702">S-nitrosylation</keyword>
<keyword id="KW-0727">SH2 domain</keyword>
<keyword id="KW-0728">SH3 domain</keyword>
<keyword id="KW-0808">Transferase</keyword>
<keyword id="KW-0829">Tyrosine-protein kinase</keyword>
<protein>
    <recommendedName>
        <fullName>Proto-oncogene tyrosine-protein kinase Src</fullName>
        <ecNumber>2.7.10.2</ecNumber>
    </recommendedName>
    <alternativeName>
        <fullName>Proto-oncogene c-Src</fullName>
    </alternativeName>
    <alternativeName>
        <fullName>pp60c-src</fullName>
        <shortName>p60-Src</shortName>
    </alternativeName>
</protein>